<organism>
    <name type="scientific">Helicobacter pylori (strain HPAG1)</name>
    <dbReference type="NCBI Taxonomy" id="357544"/>
    <lineage>
        <taxon>Bacteria</taxon>
        <taxon>Pseudomonadati</taxon>
        <taxon>Campylobacterota</taxon>
        <taxon>Epsilonproteobacteria</taxon>
        <taxon>Campylobacterales</taxon>
        <taxon>Helicobacteraceae</taxon>
        <taxon>Helicobacter</taxon>
    </lineage>
</organism>
<protein>
    <recommendedName>
        <fullName evidence="1">Glutamate-1-semialdehyde 2,1-aminomutase</fullName>
        <shortName evidence="1">GSA</shortName>
        <ecNumber evidence="1">5.4.3.8</ecNumber>
    </recommendedName>
    <alternativeName>
        <fullName evidence="1">Glutamate-1-semialdehyde aminotransferase</fullName>
        <shortName evidence="1">GSA-AT</shortName>
    </alternativeName>
</protein>
<keyword id="KW-0963">Cytoplasm</keyword>
<keyword id="KW-0413">Isomerase</keyword>
<keyword id="KW-0627">Porphyrin biosynthesis</keyword>
<keyword id="KW-0663">Pyridoxal phosphate</keyword>
<reference key="1">
    <citation type="journal article" date="2006" name="Proc. Natl. Acad. Sci. U.S.A.">
        <title>The complete genome sequence of a chronic atrophic gastritis Helicobacter pylori strain: evolution during disease progression.</title>
        <authorList>
            <person name="Oh J.D."/>
            <person name="Kling-Baeckhed H."/>
            <person name="Giannakis M."/>
            <person name="Xu J."/>
            <person name="Fulton R.S."/>
            <person name="Fulton L.A."/>
            <person name="Cordum H.S."/>
            <person name="Wang C."/>
            <person name="Elliott G."/>
            <person name="Edwards J."/>
            <person name="Mardis E.R."/>
            <person name="Engstrand L.G."/>
            <person name="Gordon J.I."/>
        </authorList>
    </citation>
    <scope>NUCLEOTIDE SEQUENCE [LARGE SCALE GENOMIC DNA]</scope>
    <source>
        <strain>HPAG1</strain>
    </source>
</reference>
<accession>Q1CUJ7</accession>
<sequence length="430" mass="46729">MELLHSINDFNEAKQVIAGGVNSPVRAFKSVKGTPPFILKGKGAYLYDVDNNHYIDFVQSWGPLIFGHADEEIEENIINTLKKGTSFGAPTELETTLAKEIISCYEGLDKVRLVNSGTEATMSAIRLARAYSQKDDLIKFEGCYHGHSDSLLVKAGSGCVTFGSPSSLGVPNDFSKHTLVARYNDLNSTEECFKKGNVGCVIIEPIAGNMGLVPAQKEFLLGLKALCEKYQAVLILDEVMSGFRASLSGSQEFYGVVPDLVTFGKVIGAGLPLACFGGRAEIMDLLSPIGGVYQAGTLSGNPLAVCAGLSALYKIKRDKTLYTRLNALAIRLTQGLKKSAQSYNIALETLNRGSMFGFFFNENAVCDFDDALKSDTEMFAKFHQKMLFKGVYLACSSFETGFICEPMTEEMIDLVVAKADESFDEIIKGV</sequence>
<gene>
    <name evidence="1" type="primary">hemL</name>
    <name type="ordered locus">HPAG1_0308</name>
</gene>
<proteinExistence type="inferred from homology"/>
<comment type="catalytic activity">
    <reaction evidence="1">
        <text>(S)-4-amino-5-oxopentanoate = 5-aminolevulinate</text>
        <dbReference type="Rhea" id="RHEA:14265"/>
        <dbReference type="ChEBI" id="CHEBI:57501"/>
        <dbReference type="ChEBI" id="CHEBI:356416"/>
        <dbReference type="EC" id="5.4.3.8"/>
    </reaction>
</comment>
<comment type="cofactor">
    <cofactor evidence="1">
        <name>pyridoxal 5'-phosphate</name>
        <dbReference type="ChEBI" id="CHEBI:597326"/>
    </cofactor>
</comment>
<comment type="pathway">
    <text evidence="1">Porphyrin-containing compound metabolism; protoporphyrin-IX biosynthesis; 5-aminolevulinate from L-glutamyl-tRNA(Glu): step 2/2.</text>
</comment>
<comment type="subunit">
    <text evidence="1">Homodimer.</text>
</comment>
<comment type="subcellular location">
    <subcellularLocation>
        <location evidence="1">Cytoplasm</location>
    </subcellularLocation>
</comment>
<comment type="similarity">
    <text evidence="1">Belongs to the class-III pyridoxal-phosphate-dependent aminotransferase family. HemL subfamily.</text>
</comment>
<evidence type="ECO:0000255" key="1">
    <source>
        <dbReference type="HAMAP-Rule" id="MF_00375"/>
    </source>
</evidence>
<feature type="chain" id="PRO_0000300920" description="Glutamate-1-semialdehyde 2,1-aminomutase">
    <location>
        <begin position="1"/>
        <end position="430"/>
    </location>
</feature>
<feature type="modified residue" description="N6-(pyridoxal phosphate)lysine" evidence="1">
    <location>
        <position position="265"/>
    </location>
</feature>
<dbReference type="EC" id="5.4.3.8" evidence="1"/>
<dbReference type="EMBL" id="CP000241">
    <property type="protein sequence ID" value="ABF84375.1"/>
    <property type="molecule type" value="Genomic_DNA"/>
</dbReference>
<dbReference type="RefSeq" id="WP_000421468.1">
    <property type="nucleotide sequence ID" value="NC_008086.1"/>
</dbReference>
<dbReference type="SMR" id="Q1CUJ7"/>
<dbReference type="KEGG" id="hpa:HPAG1_0308"/>
<dbReference type="HOGENOM" id="CLU_016922_1_5_7"/>
<dbReference type="UniPathway" id="UPA00251">
    <property type="reaction ID" value="UER00317"/>
</dbReference>
<dbReference type="GO" id="GO:0005737">
    <property type="term" value="C:cytoplasm"/>
    <property type="evidence" value="ECO:0007669"/>
    <property type="project" value="UniProtKB-SubCell"/>
</dbReference>
<dbReference type="GO" id="GO:0042286">
    <property type="term" value="F:glutamate-1-semialdehyde 2,1-aminomutase activity"/>
    <property type="evidence" value="ECO:0007669"/>
    <property type="project" value="UniProtKB-UniRule"/>
</dbReference>
<dbReference type="GO" id="GO:0030170">
    <property type="term" value="F:pyridoxal phosphate binding"/>
    <property type="evidence" value="ECO:0007669"/>
    <property type="project" value="InterPro"/>
</dbReference>
<dbReference type="GO" id="GO:0008483">
    <property type="term" value="F:transaminase activity"/>
    <property type="evidence" value="ECO:0007669"/>
    <property type="project" value="InterPro"/>
</dbReference>
<dbReference type="GO" id="GO:0006782">
    <property type="term" value="P:protoporphyrinogen IX biosynthetic process"/>
    <property type="evidence" value="ECO:0007669"/>
    <property type="project" value="UniProtKB-UniRule"/>
</dbReference>
<dbReference type="CDD" id="cd00610">
    <property type="entry name" value="OAT_like"/>
    <property type="match status" value="1"/>
</dbReference>
<dbReference type="FunFam" id="3.40.640.10:FF:000021">
    <property type="entry name" value="Glutamate-1-semialdehyde 2,1-aminomutase"/>
    <property type="match status" value="1"/>
</dbReference>
<dbReference type="Gene3D" id="3.90.1150.10">
    <property type="entry name" value="Aspartate Aminotransferase, domain 1"/>
    <property type="match status" value="1"/>
</dbReference>
<dbReference type="Gene3D" id="3.40.640.10">
    <property type="entry name" value="Type I PLP-dependent aspartate aminotransferase-like (Major domain)"/>
    <property type="match status" value="1"/>
</dbReference>
<dbReference type="HAMAP" id="MF_00375">
    <property type="entry name" value="HemL_aminotrans_3"/>
    <property type="match status" value="1"/>
</dbReference>
<dbReference type="InterPro" id="IPR004639">
    <property type="entry name" value="4pyrrol_synth_GluAld_NH2Trfase"/>
</dbReference>
<dbReference type="InterPro" id="IPR005814">
    <property type="entry name" value="Aminotrans_3"/>
</dbReference>
<dbReference type="InterPro" id="IPR049704">
    <property type="entry name" value="Aminotrans_3_PPA_site"/>
</dbReference>
<dbReference type="InterPro" id="IPR015424">
    <property type="entry name" value="PyrdxlP-dep_Trfase"/>
</dbReference>
<dbReference type="InterPro" id="IPR015421">
    <property type="entry name" value="PyrdxlP-dep_Trfase_major"/>
</dbReference>
<dbReference type="InterPro" id="IPR015422">
    <property type="entry name" value="PyrdxlP-dep_Trfase_small"/>
</dbReference>
<dbReference type="NCBIfam" id="TIGR00713">
    <property type="entry name" value="hemL"/>
    <property type="match status" value="1"/>
</dbReference>
<dbReference type="NCBIfam" id="NF000818">
    <property type="entry name" value="PRK00062.1"/>
    <property type="match status" value="1"/>
</dbReference>
<dbReference type="PANTHER" id="PTHR43713">
    <property type="entry name" value="GLUTAMATE-1-SEMIALDEHYDE 2,1-AMINOMUTASE"/>
    <property type="match status" value="1"/>
</dbReference>
<dbReference type="PANTHER" id="PTHR43713:SF3">
    <property type="entry name" value="GLUTAMATE-1-SEMIALDEHYDE 2,1-AMINOMUTASE 1, CHLOROPLASTIC-RELATED"/>
    <property type="match status" value="1"/>
</dbReference>
<dbReference type="Pfam" id="PF00202">
    <property type="entry name" value="Aminotran_3"/>
    <property type="match status" value="1"/>
</dbReference>
<dbReference type="SUPFAM" id="SSF53383">
    <property type="entry name" value="PLP-dependent transferases"/>
    <property type="match status" value="1"/>
</dbReference>
<dbReference type="PROSITE" id="PS00600">
    <property type="entry name" value="AA_TRANSFER_CLASS_3"/>
    <property type="match status" value="1"/>
</dbReference>
<name>GSA_HELPH</name>